<sequence>MKNFLCEDFLLSNETARRLYHEHAFHQPIYDYHCHLNPAEVAQNRQFDNLGQIWLEGDHYKWRGMRSAGIEERLITGDASDYDKYMAWAKTVPQTLGNPLYHWTHLELRRPFGITNALFSPDTADQIWHQCNELLATPEFTARGIMQQMNVVMAGTTDDPIDSLEHHKAIAEDDTFNVKVLPSWRPDKAFKIELDVFADYMHKLGEVADIEIRRFDDLLSALDKRLAHFDAHGCRAADHGIEIVRYAPIPSEADLDALLARRLSGEVLSELECAQFSTAVQVWLGKRYAQLGWVMQLHIGAQRNNSTRMFQLLGADAGFDSIGDRPFAFELAHLLDEMDQTNELPRTILYCLNPRDNEMMATMIGNFQGGGIAGKVQFGSGWWFNDQKDGMQRQMEQLSQLGLLSQFVGMLTDSRSFLSYTRHEYFRRILCDMVGRWAENGEVPNDLSLLGPMVEDICFGNAKRYFEERA</sequence>
<comment type="catalytic activity">
    <reaction evidence="1">
        <text>D-glucuronate = D-fructuronate</text>
        <dbReference type="Rhea" id="RHEA:13049"/>
        <dbReference type="ChEBI" id="CHEBI:58720"/>
        <dbReference type="ChEBI" id="CHEBI:59863"/>
        <dbReference type="EC" id="5.3.1.12"/>
    </reaction>
</comment>
<comment type="catalytic activity">
    <reaction evidence="1">
        <text>aldehydo-D-galacturonate = keto-D-tagaturonate</text>
        <dbReference type="Rhea" id="RHEA:27702"/>
        <dbReference type="ChEBI" id="CHEBI:12952"/>
        <dbReference type="ChEBI" id="CHEBI:17886"/>
        <dbReference type="EC" id="5.3.1.12"/>
    </reaction>
</comment>
<comment type="pathway">
    <text evidence="1">Carbohydrate metabolism; pentose and glucuronate interconversion.</text>
</comment>
<comment type="similarity">
    <text evidence="1">Belongs to the metallo-dependent hydrolases superfamily. Uronate isomerase family.</text>
</comment>
<gene>
    <name evidence="1" type="primary">uxaC</name>
    <name type="ordered locus">VVA1594</name>
</gene>
<keyword id="KW-0413">Isomerase</keyword>
<accession>Q7MBZ3</accession>
<reference key="1">
    <citation type="journal article" date="2003" name="Genome Res.">
        <title>Comparative genome analysis of Vibrio vulnificus, a marine pathogen.</title>
        <authorList>
            <person name="Chen C.-Y."/>
            <person name="Wu K.-M."/>
            <person name="Chang Y.-C."/>
            <person name="Chang C.-H."/>
            <person name="Tsai H.-C."/>
            <person name="Liao T.-L."/>
            <person name="Liu Y.-M."/>
            <person name="Chen H.-J."/>
            <person name="Shen A.B.-T."/>
            <person name="Li J.-C."/>
            <person name="Su T.-L."/>
            <person name="Shao C.-P."/>
            <person name="Lee C.-T."/>
            <person name="Hor L.-I."/>
            <person name="Tsai S.-F."/>
        </authorList>
    </citation>
    <scope>NUCLEOTIDE SEQUENCE [LARGE SCALE GENOMIC DNA]</scope>
    <source>
        <strain>YJ016</strain>
    </source>
</reference>
<organism>
    <name type="scientific">Vibrio vulnificus (strain YJ016)</name>
    <dbReference type="NCBI Taxonomy" id="196600"/>
    <lineage>
        <taxon>Bacteria</taxon>
        <taxon>Pseudomonadati</taxon>
        <taxon>Pseudomonadota</taxon>
        <taxon>Gammaproteobacteria</taxon>
        <taxon>Vibrionales</taxon>
        <taxon>Vibrionaceae</taxon>
        <taxon>Vibrio</taxon>
    </lineage>
</organism>
<name>UXAC_VIBVY</name>
<evidence type="ECO:0000255" key="1">
    <source>
        <dbReference type="HAMAP-Rule" id="MF_00675"/>
    </source>
</evidence>
<feature type="chain" id="PRO_0000172793" description="Uronate isomerase">
    <location>
        <begin position="1"/>
        <end position="470"/>
    </location>
</feature>
<proteinExistence type="inferred from homology"/>
<dbReference type="EC" id="5.3.1.12" evidence="1"/>
<dbReference type="EMBL" id="BA000038">
    <property type="protein sequence ID" value="BAC97620.1"/>
    <property type="molecule type" value="Genomic_DNA"/>
</dbReference>
<dbReference type="RefSeq" id="WP_011152793.1">
    <property type="nucleotide sequence ID" value="NC_005140.1"/>
</dbReference>
<dbReference type="SMR" id="Q7MBZ3"/>
<dbReference type="STRING" id="672.VV93_v1c44640"/>
<dbReference type="KEGG" id="vvy:VVA1594"/>
<dbReference type="PATRIC" id="fig|196600.6.peg.4724"/>
<dbReference type="eggNOG" id="COG1904">
    <property type="taxonomic scope" value="Bacteria"/>
</dbReference>
<dbReference type="HOGENOM" id="CLU_044465_1_0_6"/>
<dbReference type="UniPathway" id="UPA00246"/>
<dbReference type="Proteomes" id="UP000002675">
    <property type="component" value="Chromosome II"/>
</dbReference>
<dbReference type="GO" id="GO:0008880">
    <property type="term" value="F:glucuronate isomerase activity"/>
    <property type="evidence" value="ECO:0007669"/>
    <property type="project" value="UniProtKB-UniRule"/>
</dbReference>
<dbReference type="GO" id="GO:0019698">
    <property type="term" value="P:D-galacturonate catabolic process"/>
    <property type="evidence" value="ECO:0007669"/>
    <property type="project" value="TreeGrafter"/>
</dbReference>
<dbReference type="GO" id="GO:0042840">
    <property type="term" value="P:D-glucuronate catabolic process"/>
    <property type="evidence" value="ECO:0007669"/>
    <property type="project" value="TreeGrafter"/>
</dbReference>
<dbReference type="Gene3D" id="3.20.20.140">
    <property type="entry name" value="Metal-dependent hydrolases"/>
    <property type="match status" value="1"/>
</dbReference>
<dbReference type="Gene3D" id="1.10.2020.10">
    <property type="entry name" value="uronate isomerase, domain 2, chain A"/>
    <property type="match status" value="1"/>
</dbReference>
<dbReference type="HAMAP" id="MF_00675">
    <property type="entry name" value="UxaC"/>
    <property type="match status" value="1"/>
</dbReference>
<dbReference type="InterPro" id="IPR032466">
    <property type="entry name" value="Metal_Hydrolase"/>
</dbReference>
<dbReference type="InterPro" id="IPR003766">
    <property type="entry name" value="Uronate_isomerase"/>
</dbReference>
<dbReference type="NCBIfam" id="NF002794">
    <property type="entry name" value="PRK02925.1"/>
    <property type="match status" value="1"/>
</dbReference>
<dbReference type="PANTHER" id="PTHR30068">
    <property type="entry name" value="URONATE ISOMERASE"/>
    <property type="match status" value="1"/>
</dbReference>
<dbReference type="PANTHER" id="PTHR30068:SF4">
    <property type="entry name" value="URONATE ISOMERASE"/>
    <property type="match status" value="1"/>
</dbReference>
<dbReference type="Pfam" id="PF02614">
    <property type="entry name" value="UxaC"/>
    <property type="match status" value="1"/>
</dbReference>
<dbReference type="SUPFAM" id="SSF51556">
    <property type="entry name" value="Metallo-dependent hydrolases"/>
    <property type="match status" value="1"/>
</dbReference>
<protein>
    <recommendedName>
        <fullName evidence="1">Uronate isomerase</fullName>
        <ecNumber evidence="1">5.3.1.12</ecNumber>
    </recommendedName>
    <alternativeName>
        <fullName evidence="1">Glucuronate isomerase</fullName>
    </alternativeName>
    <alternativeName>
        <fullName evidence="1">Uronic isomerase</fullName>
    </alternativeName>
</protein>